<proteinExistence type="inferred from homology"/>
<feature type="chain" id="PRO_1000074587" description="Ribosome-recycling factor">
    <location>
        <begin position="1"/>
        <end position="185"/>
    </location>
</feature>
<feature type="region of interest" description="Disordered" evidence="2">
    <location>
        <begin position="142"/>
        <end position="173"/>
    </location>
</feature>
<feature type="compositionally biased region" description="Basic and acidic residues" evidence="2">
    <location>
        <begin position="142"/>
        <end position="164"/>
    </location>
</feature>
<protein>
    <recommendedName>
        <fullName evidence="1">Ribosome-recycling factor</fullName>
        <shortName evidence="1">RRF</shortName>
    </recommendedName>
    <alternativeName>
        <fullName evidence="1">Ribosome-releasing factor</fullName>
    </alternativeName>
</protein>
<comment type="function">
    <text evidence="1">Responsible for the release of ribosomes from messenger RNA at the termination of protein biosynthesis. May increase the efficiency of translation by recycling ribosomes from one round of translation to another.</text>
</comment>
<comment type="subcellular location">
    <subcellularLocation>
        <location evidence="1">Cytoplasm</location>
    </subcellularLocation>
</comment>
<comment type="similarity">
    <text evidence="1">Belongs to the RRF family.</text>
</comment>
<sequence>MIDETLFDAEEKMEKAVSVARDDLASIRTGRANPGMFNRIHIDYYGASTPITQLSSINVPEARMVVIKPYEANQLRPIEDAIRNSDLGVNPTNDGNIIRVSIPQLTEERRRDLVKQAKSKGEDAKVSIRNIRRKAMEELARIKKDGDAGEDDVTRAEKDLDKSTHQYTSQVDDLVKHKEGELLEV</sequence>
<gene>
    <name evidence="1" type="primary">frr</name>
    <name type="ordered locus">Mflv_4123</name>
</gene>
<keyword id="KW-0963">Cytoplasm</keyword>
<keyword id="KW-0648">Protein biosynthesis</keyword>
<name>RRF_MYCGI</name>
<dbReference type="EMBL" id="CP000656">
    <property type="protein sequence ID" value="ABP46593.1"/>
    <property type="molecule type" value="Genomic_DNA"/>
</dbReference>
<dbReference type="SMR" id="A4TC77"/>
<dbReference type="STRING" id="350054.Mflv_4123"/>
<dbReference type="KEGG" id="mgi:Mflv_4123"/>
<dbReference type="eggNOG" id="COG0233">
    <property type="taxonomic scope" value="Bacteria"/>
</dbReference>
<dbReference type="HOGENOM" id="CLU_073981_2_0_11"/>
<dbReference type="OrthoDB" id="9804006at2"/>
<dbReference type="GO" id="GO:0005737">
    <property type="term" value="C:cytoplasm"/>
    <property type="evidence" value="ECO:0007669"/>
    <property type="project" value="UniProtKB-SubCell"/>
</dbReference>
<dbReference type="GO" id="GO:0043023">
    <property type="term" value="F:ribosomal large subunit binding"/>
    <property type="evidence" value="ECO:0007669"/>
    <property type="project" value="TreeGrafter"/>
</dbReference>
<dbReference type="GO" id="GO:0006415">
    <property type="term" value="P:translational termination"/>
    <property type="evidence" value="ECO:0007669"/>
    <property type="project" value="UniProtKB-UniRule"/>
</dbReference>
<dbReference type="CDD" id="cd00520">
    <property type="entry name" value="RRF"/>
    <property type="match status" value="1"/>
</dbReference>
<dbReference type="FunFam" id="1.10.132.20:FF:000001">
    <property type="entry name" value="Ribosome-recycling factor"/>
    <property type="match status" value="1"/>
</dbReference>
<dbReference type="FunFam" id="3.30.1360.40:FF:000001">
    <property type="entry name" value="Ribosome-recycling factor"/>
    <property type="match status" value="1"/>
</dbReference>
<dbReference type="Gene3D" id="3.30.1360.40">
    <property type="match status" value="1"/>
</dbReference>
<dbReference type="Gene3D" id="1.10.132.20">
    <property type="entry name" value="Ribosome-recycling factor"/>
    <property type="match status" value="1"/>
</dbReference>
<dbReference type="HAMAP" id="MF_00040">
    <property type="entry name" value="RRF"/>
    <property type="match status" value="1"/>
</dbReference>
<dbReference type="InterPro" id="IPR002661">
    <property type="entry name" value="Ribosome_recyc_fac"/>
</dbReference>
<dbReference type="InterPro" id="IPR023584">
    <property type="entry name" value="Ribosome_recyc_fac_dom"/>
</dbReference>
<dbReference type="InterPro" id="IPR036191">
    <property type="entry name" value="RRF_sf"/>
</dbReference>
<dbReference type="NCBIfam" id="TIGR00496">
    <property type="entry name" value="frr"/>
    <property type="match status" value="1"/>
</dbReference>
<dbReference type="PANTHER" id="PTHR20982:SF3">
    <property type="entry name" value="MITOCHONDRIAL RIBOSOME RECYCLING FACTOR PSEUDO 1"/>
    <property type="match status" value="1"/>
</dbReference>
<dbReference type="PANTHER" id="PTHR20982">
    <property type="entry name" value="RIBOSOME RECYCLING FACTOR"/>
    <property type="match status" value="1"/>
</dbReference>
<dbReference type="Pfam" id="PF01765">
    <property type="entry name" value="RRF"/>
    <property type="match status" value="1"/>
</dbReference>
<dbReference type="SUPFAM" id="SSF55194">
    <property type="entry name" value="Ribosome recycling factor, RRF"/>
    <property type="match status" value="1"/>
</dbReference>
<organism>
    <name type="scientific">Mycolicibacterium gilvum (strain PYR-GCK)</name>
    <name type="common">Mycobacterium gilvum (strain PYR-GCK)</name>
    <dbReference type="NCBI Taxonomy" id="350054"/>
    <lineage>
        <taxon>Bacteria</taxon>
        <taxon>Bacillati</taxon>
        <taxon>Actinomycetota</taxon>
        <taxon>Actinomycetes</taxon>
        <taxon>Mycobacteriales</taxon>
        <taxon>Mycobacteriaceae</taxon>
        <taxon>Mycolicibacterium</taxon>
    </lineage>
</organism>
<reference key="1">
    <citation type="submission" date="2007-04" db="EMBL/GenBank/DDBJ databases">
        <title>Complete sequence of chromosome of Mycobacterium gilvum PYR-GCK.</title>
        <authorList>
            <consortium name="US DOE Joint Genome Institute"/>
            <person name="Copeland A."/>
            <person name="Lucas S."/>
            <person name="Lapidus A."/>
            <person name="Barry K."/>
            <person name="Detter J.C."/>
            <person name="Glavina del Rio T."/>
            <person name="Hammon N."/>
            <person name="Israni S."/>
            <person name="Dalin E."/>
            <person name="Tice H."/>
            <person name="Pitluck S."/>
            <person name="Chain P."/>
            <person name="Malfatti S."/>
            <person name="Shin M."/>
            <person name="Vergez L."/>
            <person name="Schmutz J."/>
            <person name="Larimer F."/>
            <person name="Land M."/>
            <person name="Hauser L."/>
            <person name="Kyrpides N."/>
            <person name="Mikhailova N."/>
            <person name="Miller C."/>
            <person name="Richardson P."/>
        </authorList>
    </citation>
    <scope>NUCLEOTIDE SEQUENCE [LARGE SCALE GENOMIC DNA]</scope>
    <source>
        <strain>PYR-GCK</strain>
    </source>
</reference>
<evidence type="ECO:0000255" key="1">
    <source>
        <dbReference type="HAMAP-Rule" id="MF_00040"/>
    </source>
</evidence>
<evidence type="ECO:0000256" key="2">
    <source>
        <dbReference type="SAM" id="MobiDB-lite"/>
    </source>
</evidence>
<accession>A4TC77</accession>